<organism>
    <name type="scientific">Variovorax paradoxus (strain S110)</name>
    <dbReference type="NCBI Taxonomy" id="543728"/>
    <lineage>
        <taxon>Bacteria</taxon>
        <taxon>Pseudomonadati</taxon>
        <taxon>Pseudomonadota</taxon>
        <taxon>Betaproteobacteria</taxon>
        <taxon>Burkholderiales</taxon>
        <taxon>Comamonadaceae</taxon>
        <taxon>Variovorax</taxon>
    </lineage>
</organism>
<dbReference type="EC" id="2.7.1.170" evidence="1"/>
<dbReference type="EMBL" id="CP001635">
    <property type="protein sequence ID" value="ACS21279.1"/>
    <property type="molecule type" value="Genomic_DNA"/>
</dbReference>
<dbReference type="SMR" id="C5CM20"/>
<dbReference type="STRING" id="543728.Vapar_4674"/>
<dbReference type="KEGG" id="vap:Vapar_4674"/>
<dbReference type="eggNOG" id="COG2377">
    <property type="taxonomic scope" value="Bacteria"/>
</dbReference>
<dbReference type="HOGENOM" id="CLU_038782_0_0_4"/>
<dbReference type="OrthoDB" id="9763949at2"/>
<dbReference type="UniPathway" id="UPA00343"/>
<dbReference type="UniPathway" id="UPA00544"/>
<dbReference type="GO" id="GO:0005524">
    <property type="term" value="F:ATP binding"/>
    <property type="evidence" value="ECO:0007669"/>
    <property type="project" value="UniProtKB-UniRule"/>
</dbReference>
<dbReference type="GO" id="GO:0016301">
    <property type="term" value="F:kinase activity"/>
    <property type="evidence" value="ECO:0007669"/>
    <property type="project" value="UniProtKB-KW"/>
</dbReference>
<dbReference type="GO" id="GO:0016773">
    <property type="term" value="F:phosphotransferase activity, alcohol group as acceptor"/>
    <property type="evidence" value="ECO:0007669"/>
    <property type="project" value="UniProtKB-UniRule"/>
</dbReference>
<dbReference type="GO" id="GO:0097175">
    <property type="term" value="P:1,6-anhydro-N-acetyl-beta-muramic acid catabolic process"/>
    <property type="evidence" value="ECO:0007669"/>
    <property type="project" value="UniProtKB-UniRule"/>
</dbReference>
<dbReference type="GO" id="GO:0006040">
    <property type="term" value="P:amino sugar metabolic process"/>
    <property type="evidence" value="ECO:0007669"/>
    <property type="project" value="InterPro"/>
</dbReference>
<dbReference type="GO" id="GO:0009254">
    <property type="term" value="P:peptidoglycan turnover"/>
    <property type="evidence" value="ECO:0007669"/>
    <property type="project" value="UniProtKB-UniRule"/>
</dbReference>
<dbReference type="CDD" id="cd24050">
    <property type="entry name" value="ASKHA_NBD_ANMK"/>
    <property type="match status" value="1"/>
</dbReference>
<dbReference type="Gene3D" id="3.30.420.40">
    <property type="match status" value="2"/>
</dbReference>
<dbReference type="HAMAP" id="MF_01270">
    <property type="entry name" value="AnhMurNAc_kinase"/>
    <property type="match status" value="1"/>
</dbReference>
<dbReference type="InterPro" id="IPR005338">
    <property type="entry name" value="Anhydro_N_Ac-Mur_kinase"/>
</dbReference>
<dbReference type="InterPro" id="IPR043129">
    <property type="entry name" value="ATPase_NBD"/>
</dbReference>
<dbReference type="NCBIfam" id="NF007139">
    <property type="entry name" value="PRK09585.1-3"/>
    <property type="match status" value="1"/>
</dbReference>
<dbReference type="PANTHER" id="PTHR30605">
    <property type="entry name" value="ANHYDRO-N-ACETYLMURAMIC ACID KINASE"/>
    <property type="match status" value="1"/>
</dbReference>
<dbReference type="PANTHER" id="PTHR30605:SF0">
    <property type="entry name" value="ANHYDRO-N-ACETYLMURAMIC ACID KINASE"/>
    <property type="match status" value="1"/>
</dbReference>
<dbReference type="Pfam" id="PF03702">
    <property type="entry name" value="AnmK"/>
    <property type="match status" value="1"/>
</dbReference>
<dbReference type="SUPFAM" id="SSF53067">
    <property type="entry name" value="Actin-like ATPase domain"/>
    <property type="match status" value="1"/>
</dbReference>
<name>ANMK_VARPS</name>
<comment type="function">
    <text evidence="1">Catalyzes the specific phosphorylation of 1,6-anhydro-N-acetylmuramic acid (anhMurNAc) with the simultaneous cleavage of the 1,6-anhydro ring, generating MurNAc-6-P. Is required for the utilization of anhMurNAc either imported from the medium or derived from its own cell wall murein, and thus plays a role in cell wall recycling.</text>
</comment>
<comment type="catalytic activity">
    <reaction evidence="1">
        <text>1,6-anhydro-N-acetyl-beta-muramate + ATP + H2O = N-acetyl-D-muramate 6-phosphate + ADP + H(+)</text>
        <dbReference type="Rhea" id="RHEA:24952"/>
        <dbReference type="ChEBI" id="CHEBI:15377"/>
        <dbReference type="ChEBI" id="CHEBI:15378"/>
        <dbReference type="ChEBI" id="CHEBI:30616"/>
        <dbReference type="ChEBI" id="CHEBI:58690"/>
        <dbReference type="ChEBI" id="CHEBI:58722"/>
        <dbReference type="ChEBI" id="CHEBI:456216"/>
        <dbReference type="EC" id="2.7.1.170"/>
    </reaction>
</comment>
<comment type="pathway">
    <text evidence="1">Amino-sugar metabolism; 1,6-anhydro-N-acetylmuramate degradation.</text>
</comment>
<comment type="pathway">
    <text evidence="1">Cell wall biogenesis; peptidoglycan recycling.</text>
</comment>
<comment type="similarity">
    <text evidence="1">Belongs to the anhydro-N-acetylmuramic acid kinase family.</text>
</comment>
<protein>
    <recommendedName>
        <fullName evidence="1">Anhydro-N-acetylmuramic acid kinase</fullName>
        <ecNumber evidence="1">2.7.1.170</ecNumber>
    </recommendedName>
    <alternativeName>
        <fullName evidence="1">AnhMurNAc kinase</fullName>
    </alternativeName>
</protein>
<keyword id="KW-0067">ATP-binding</keyword>
<keyword id="KW-0119">Carbohydrate metabolism</keyword>
<keyword id="KW-0418">Kinase</keyword>
<keyword id="KW-0547">Nucleotide-binding</keyword>
<keyword id="KW-0808">Transferase</keyword>
<accession>C5CM20</accession>
<sequence length="375" mass="38420">MAGELFIGLMSGTSLDGVDGVLADFADGRIAVRAYATAPFPAALRAELMALNTPGDNELHRAALAGNGLARLYAGVASQLLADSSTPASQVAALGAHGQTVRHRPTEFDGVGYTLQINNPSLLAELTGIDVVADFRSRDLAAGGQGAPLVPAFHRALFARAGQPVAVLNIGGISNLSLLPAADAPGEPAVLGFDCGPGNALMDHWSQLHTGQPFDRGGRWAASGQVLPGLLARLQADPYFAKAPPKSTGRDLFNPAWLSACLAPAIGAAPADVQATLTEFTASVCAADVLRYGSDSKLLIVCGGGALNDHLIERLRAHLPGVEVAASTAHGLPPLQVEAAAFAWLARSTLRREAGNLASVTGARGGRVLGAIYPA</sequence>
<gene>
    <name evidence="1" type="primary">anmK</name>
    <name type="ordered locus">Vapar_4674</name>
</gene>
<feature type="chain" id="PRO_1000214177" description="Anhydro-N-acetylmuramic acid kinase">
    <location>
        <begin position="1"/>
        <end position="375"/>
    </location>
</feature>
<feature type="binding site" evidence="1">
    <location>
        <begin position="12"/>
        <end position="19"/>
    </location>
    <ligand>
        <name>ATP</name>
        <dbReference type="ChEBI" id="CHEBI:30616"/>
    </ligand>
</feature>
<evidence type="ECO:0000255" key="1">
    <source>
        <dbReference type="HAMAP-Rule" id="MF_01270"/>
    </source>
</evidence>
<proteinExistence type="inferred from homology"/>
<reference key="1">
    <citation type="journal article" date="2011" name="J. Bacteriol.">
        <title>Complete genome sequence of the metabolically versatile plant growth-promoting endophyte, Variovorax paradoxus S110.</title>
        <authorList>
            <person name="Han J.I."/>
            <person name="Choi H.K."/>
            <person name="Lee S.W."/>
            <person name="Orwin P.M."/>
            <person name="Kim J."/>
            <person name="Laroe S.L."/>
            <person name="Kim T.G."/>
            <person name="O'Neil J."/>
            <person name="Leadbetter J.R."/>
            <person name="Lee S.Y."/>
            <person name="Hur C.G."/>
            <person name="Spain J.C."/>
            <person name="Ovchinnikova G."/>
            <person name="Goodwin L."/>
            <person name="Han C."/>
        </authorList>
    </citation>
    <scope>NUCLEOTIDE SEQUENCE [LARGE SCALE GENOMIC DNA]</scope>
    <source>
        <strain>S110</strain>
    </source>
</reference>